<comment type="function">
    <text evidence="4 5">A type II topoisomerase that negatively supercoils closed circular double-stranded (ds) DNA in an ATP-dependent manner to modulate DNA topology and maintain chromosomes in an underwound state, and also catalyzes the interconversion of other topological isomers of double-stranded DNA rings, including catenanes and knotted rings. Replenishes negative supercoiling downstream of highly transcribed genes to help control overall chromosomal supercoiling density (PubMed:22916023). E.coli makes 15% more negative supercoils in pBR322 plasmid DNA than S.typhimurium; the S.typhimurium GyrB subunit is toxic in E.coli, while the E.coli copy can be expressed in S.typhimurium even though the 2 subunits have 777/804 residues identical (PubMed:17400739).</text>
</comment>
<comment type="function">
    <text>Negative supercoiling favors strand separation, and DNA replication, transcription, recombination and repair, all of which involve strand separation. Type II topoisomerases break and join 2 DNA strands simultaneously in an ATP-dependent manner.</text>
</comment>
<comment type="catalytic activity">
    <reaction evidence="1">
        <text>ATP-dependent breakage, passage and rejoining of double-stranded DNA.</text>
        <dbReference type="EC" id="5.6.2.2"/>
    </reaction>
</comment>
<comment type="subunit">
    <text evidence="1">Heterotetramer, composed of two GyrA and two GyrB chains. In the heterotetramer, GyrA contains the active site tyrosine that forms a transient covalent intermediate with DNA, while GyrB binds cofactors and catalyzes ATP hydrolysis.</text>
</comment>
<comment type="subcellular location">
    <subcellularLocation>
        <location evidence="1">Cytoplasm</location>
    </subcellularLocation>
</comment>
<comment type="miscellaneous">
    <text evidence="1">Few gyrases are as efficient as E.coli at forming negative supercoils. Not all organisms have 2 type II topoisomerases; in organisms with a single type II topoisomerase this enzyme also has to decatenate newly replicated chromosomes.</text>
</comment>
<comment type="similarity">
    <text evidence="1">Belongs to the type II topoisomerase GyrA/ParC subunit family.</text>
</comment>
<evidence type="ECO:0000255" key="1">
    <source>
        <dbReference type="HAMAP-Rule" id="MF_01897"/>
    </source>
</evidence>
<evidence type="ECO:0000255" key="2">
    <source>
        <dbReference type="PROSITE-ProRule" id="PRU01384"/>
    </source>
</evidence>
<evidence type="ECO:0000256" key="3">
    <source>
        <dbReference type="SAM" id="MobiDB-lite"/>
    </source>
</evidence>
<evidence type="ECO:0000269" key="4">
    <source>
    </source>
</evidence>
<evidence type="ECO:0000269" key="5">
    <source>
    </source>
</evidence>
<keyword id="KW-0067">ATP-binding</keyword>
<keyword id="KW-0963">Cytoplasm</keyword>
<keyword id="KW-0238">DNA-binding</keyword>
<keyword id="KW-0413">Isomerase</keyword>
<keyword id="KW-0547">Nucleotide-binding</keyword>
<keyword id="KW-1185">Reference proteome</keyword>
<keyword id="KW-0799">Topoisomerase</keyword>
<reference key="1">
    <citation type="journal article" date="2001" name="Nature">
        <title>Complete genome sequence of Salmonella enterica serovar Typhimurium LT2.</title>
        <authorList>
            <person name="McClelland M."/>
            <person name="Sanderson K.E."/>
            <person name="Spieth J."/>
            <person name="Clifton S.W."/>
            <person name="Latreille P."/>
            <person name="Courtney L."/>
            <person name="Porwollik S."/>
            <person name="Ali J."/>
            <person name="Dante M."/>
            <person name="Du F."/>
            <person name="Hou S."/>
            <person name="Layman D."/>
            <person name="Leonard S."/>
            <person name="Nguyen C."/>
            <person name="Scott K."/>
            <person name="Holmes A."/>
            <person name="Grewal N."/>
            <person name="Mulvaney E."/>
            <person name="Ryan E."/>
            <person name="Sun H."/>
            <person name="Florea L."/>
            <person name="Miller W."/>
            <person name="Stoneking T."/>
            <person name="Nhan M."/>
            <person name="Waterston R."/>
            <person name="Wilson R.K."/>
        </authorList>
    </citation>
    <scope>NUCLEOTIDE SEQUENCE [LARGE SCALE GENOMIC DNA]</scope>
    <source>
        <strain>LT2 / SGSC1412 / ATCC 700720</strain>
    </source>
</reference>
<reference key="2">
    <citation type="submission" date="1997-02" db="EMBL/GenBank/DDBJ databases">
        <authorList>
            <person name="Griggs D.J."/>
        </authorList>
    </citation>
    <scope>NUCLEOTIDE SEQUENCE [GENOMIC DNA] OF 39-160</scope>
    <source>
        <strain>NCTC 74</strain>
    </source>
</reference>
<reference key="3">
    <citation type="submission" date="1995-05" db="EMBL/GenBank/DDBJ databases">
        <authorList>
            <person name="Ruiz J."/>
            <person name="Castro D."/>
            <person name="Goni P."/>
            <person name="Borrego J.J."/>
            <person name="Vila J."/>
        </authorList>
    </citation>
    <scope>NUCLEOTIDE SEQUENCE [GENOMIC DNA] OF 72-166</scope>
    <source>
        <strain>SM4</strain>
    </source>
</reference>
<reference key="4">
    <citation type="journal article" date="1996" name="Antimicrob. Agents Chemother.">
        <title>Mutations in gyrA gene of quinolone-resistant Salmonella serotypes isolated from humans and animals.</title>
        <authorList>
            <person name="Griggs D."/>
            <person name="Gensberg K."/>
            <person name="Piddock L.J.V."/>
        </authorList>
    </citation>
    <scope>NUCLEOTIDE SEQUENCE [GENOMIC DNA] OF 74-159</scope>
    <source>
        <strain>NCTC 74</strain>
    </source>
</reference>
<reference key="5">
    <citation type="journal article" date="2007" name="J. Bacteriol.">
        <title>Growth rate toxicity phenotypes and homeostatic supercoil control differentiate Escherichia coli from Salmonella enterica serovar Typhimurium.</title>
        <authorList>
            <person name="Champion K."/>
            <person name="Higgins N.P."/>
        </authorList>
    </citation>
    <scope>FUNCTION</scope>
    <source>
        <strain>LT2 / SGSC1412 / ATCC 700720</strain>
    </source>
</reference>
<reference key="6">
    <citation type="journal article" date="2012" name="PLoS Genet.">
        <title>Rates of gyrase supercoiling and transcription elongation control supercoil density in a bacterial chromosome.</title>
        <authorList>
            <person name="Rovinskiy N."/>
            <person name="Agbleke A.A."/>
            <person name="Chesnokova O."/>
            <person name="Pang Z."/>
            <person name="Higgins N.P."/>
        </authorList>
    </citation>
    <scope>FUNCTION</scope>
    <scope>MUTAGENESIS OF ARG-358 AND GLY-597</scope>
    <source>
        <strain>LT2 / SGSC1412 / ATCC 700720</strain>
    </source>
</reference>
<dbReference type="EC" id="5.6.2.2" evidence="1"/>
<dbReference type="EMBL" id="AE006468">
    <property type="protein sequence ID" value="AAL21173.1"/>
    <property type="molecule type" value="Genomic_DNA"/>
</dbReference>
<dbReference type="EMBL" id="X78977">
    <property type="protein sequence ID" value="CAA55580.1"/>
    <property type="molecule type" value="Genomic_DNA"/>
</dbReference>
<dbReference type="EMBL" id="X86695">
    <property type="protein sequence ID" value="CAA60388.1"/>
    <property type="molecule type" value="Genomic_DNA"/>
</dbReference>
<dbReference type="PIR" id="S54254">
    <property type="entry name" value="S54254"/>
</dbReference>
<dbReference type="RefSeq" id="NP_461214.1">
    <property type="nucleotide sequence ID" value="NC_003197.2"/>
</dbReference>
<dbReference type="RefSeq" id="WP_001281271.1">
    <property type="nucleotide sequence ID" value="NC_003197.2"/>
</dbReference>
<dbReference type="SMR" id="P37411"/>
<dbReference type="STRING" id="99287.STM2272"/>
<dbReference type="PaxDb" id="99287-STM2272"/>
<dbReference type="GeneID" id="1253794"/>
<dbReference type="KEGG" id="stm:STM2272"/>
<dbReference type="PATRIC" id="fig|99287.12.peg.2405"/>
<dbReference type="HOGENOM" id="CLU_002977_6_1_6"/>
<dbReference type="OMA" id="THHWLLF"/>
<dbReference type="PhylomeDB" id="P37411"/>
<dbReference type="BioCyc" id="SENT99287:STM2272-MONOMER"/>
<dbReference type="Proteomes" id="UP000001014">
    <property type="component" value="Chromosome"/>
</dbReference>
<dbReference type="GO" id="GO:0005694">
    <property type="term" value="C:chromosome"/>
    <property type="evidence" value="ECO:0007669"/>
    <property type="project" value="InterPro"/>
</dbReference>
<dbReference type="GO" id="GO:0005737">
    <property type="term" value="C:cytoplasm"/>
    <property type="evidence" value="ECO:0000318"/>
    <property type="project" value="GO_Central"/>
</dbReference>
<dbReference type="GO" id="GO:0009330">
    <property type="term" value="C:DNA topoisomerase type II (double strand cut, ATP-hydrolyzing) complex"/>
    <property type="evidence" value="ECO:0000318"/>
    <property type="project" value="GO_Central"/>
</dbReference>
<dbReference type="GO" id="GO:0005524">
    <property type="term" value="F:ATP binding"/>
    <property type="evidence" value="ECO:0000318"/>
    <property type="project" value="GO_Central"/>
</dbReference>
<dbReference type="GO" id="GO:0003677">
    <property type="term" value="F:DNA binding"/>
    <property type="evidence" value="ECO:0000318"/>
    <property type="project" value="GO_Central"/>
</dbReference>
<dbReference type="GO" id="GO:0034335">
    <property type="term" value="F:DNA negative supercoiling activity"/>
    <property type="evidence" value="ECO:0007669"/>
    <property type="project" value="UniProtKB-ARBA"/>
</dbReference>
<dbReference type="GO" id="GO:0006265">
    <property type="term" value="P:DNA topological change"/>
    <property type="evidence" value="ECO:0000318"/>
    <property type="project" value="GO_Central"/>
</dbReference>
<dbReference type="GO" id="GO:0006261">
    <property type="term" value="P:DNA-templated DNA replication"/>
    <property type="evidence" value="ECO:0007669"/>
    <property type="project" value="UniProtKB-UniRule"/>
</dbReference>
<dbReference type="CDD" id="cd00187">
    <property type="entry name" value="TOP4c"/>
    <property type="match status" value="1"/>
</dbReference>
<dbReference type="FunFam" id="2.120.10.90:FF:000002">
    <property type="entry name" value="DNA gyrase subunit A"/>
    <property type="match status" value="1"/>
</dbReference>
<dbReference type="FunFam" id="3.30.1360.40:FF:000002">
    <property type="entry name" value="DNA gyrase subunit A"/>
    <property type="match status" value="1"/>
</dbReference>
<dbReference type="FunFam" id="3.90.199.10:FF:000001">
    <property type="entry name" value="DNA gyrase subunit A"/>
    <property type="match status" value="1"/>
</dbReference>
<dbReference type="Gene3D" id="3.30.1360.40">
    <property type="match status" value="1"/>
</dbReference>
<dbReference type="Gene3D" id="2.120.10.90">
    <property type="entry name" value="DNA gyrase/topoisomerase IV, subunit A, C-terminal"/>
    <property type="match status" value="1"/>
</dbReference>
<dbReference type="Gene3D" id="3.90.199.10">
    <property type="entry name" value="Topoisomerase II, domain 5"/>
    <property type="match status" value="1"/>
</dbReference>
<dbReference type="Gene3D" id="1.10.268.10">
    <property type="entry name" value="Topoisomerase, domain 3"/>
    <property type="match status" value="1"/>
</dbReference>
<dbReference type="HAMAP" id="MF_01897">
    <property type="entry name" value="GyrA"/>
    <property type="match status" value="1"/>
</dbReference>
<dbReference type="InterPro" id="IPR005743">
    <property type="entry name" value="GyrA"/>
</dbReference>
<dbReference type="InterPro" id="IPR006691">
    <property type="entry name" value="GyrA/parC_rep"/>
</dbReference>
<dbReference type="InterPro" id="IPR035516">
    <property type="entry name" value="Gyrase/topoIV_suA_C"/>
</dbReference>
<dbReference type="InterPro" id="IPR013760">
    <property type="entry name" value="Topo_IIA-like_dom_sf"/>
</dbReference>
<dbReference type="InterPro" id="IPR013758">
    <property type="entry name" value="Topo_IIA_A/C_ab"/>
</dbReference>
<dbReference type="InterPro" id="IPR013757">
    <property type="entry name" value="Topo_IIA_A_a_sf"/>
</dbReference>
<dbReference type="InterPro" id="IPR002205">
    <property type="entry name" value="Topo_IIA_dom_A"/>
</dbReference>
<dbReference type="InterPro" id="IPR050220">
    <property type="entry name" value="Type_II_DNA_Topoisomerases"/>
</dbReference>
<dbReference type="NCBIfam" id="TIGR01063">
    <property type="entry name" value="gyrA"/>
    <property type="match status" value="1"/>
</dbReference>
<dbReference type="NCBIfam" id="NF004043">
    <property type="entry name" value="PRK05560.1"/>
    <property type="match status" value="1"/>
</dbReference>
<dbReference type="NCBIfam" id="NF004044">
    <property type="entry name" value="PRK05561.1"/>
    <property type="match status" value="1"/>
</dbReference>
<dbReference type="PANTHER" id="PTHR43493:SF5">
    <property type="entry name" value="DNA GYRASE SUBUNIT A, CHLOROPLASTIC_MITOCHONDRIAL"/>
    <property type="match status" value="1"/>
</dbReference>
<dbReference type="PANTHER" id="PTHR43493">
    <property type="entry name" value="DNA GYRASE/TOPOISOMERASE SUBUNIT A"/>
    <property type="match status" value="1"/>
</dbReference>
<dbReference type="Pfam" id="PF03989">
    <property type="entry name" value="DNA_gyraseA_C"/>
    <property type="match status" value="6"/>
</dbReference>
<dbReference type="Pfam" id="PF00521">
    <property type="entry name" value="DNA_topoisoIV"/>
    <property type="match status" value="1"/>
</dbReference>
<dbReference type="SMART" id="SM00434">
    <property type="entry name" value="TOP4c"/>
    <property type="match status" value="1"/>
</dbReference>
<dbReference type="SUPFAM" id="SSF101904">
    <property type="entry name" value="GyrA/ParC C-terminal domain-like"/>
    <property type="match status" value="1"/>
</dbReference>
<dbReference type="SUPFAM" id="SSF56719">
    <property type="entry name" value="Type II DNA topoisomerase"/>
    <property type="match status" value="1"/>
</dbReference>
<dbReference type="PROSITE" id="PS52040">
    <property type="entry name" value="TOPO_IIA"/>
    <property type="match status" value="1"/>
</dbReference>
<gene>
    <name evidence="1" type="primary">gyrA</name>
    <name type="ordered locus">STM2272</name>
</gene>
<sequence length="878" mass="97064">MSDLAREITPVNIEEELKSSYLDYAMSVIVGRALPDVRDGLKPVHRRVLYAMNVLGNDWNKAYKKSARVVGDVIGKYHPHGDSAVYDTIVRMAQPFSLRYMLVDGQGNFGSIDGDSAAAMRYTEIRLAKIAHELMADLEKETVDFVDNYDGTEKIPDVMPTKIPNLLVNGSSGIAVGMATNIPPHNLTEVINGCLAYIDNEDISIEGLMEHIPGPDFPTAAIINGRRGIEEAYRTGRGKVYIRARAEVEADAKTGRETIIVHEIPYQVNKARLIEKIAELVKDKRVEGISALRDESDKDGMRIVIEVKRDAVGEVVLNNLYSQTQLQVSFGINMVALHHGQPKIMNLKDIISAFVRHRREVVTRRTIFELRKARDRAHILEALAIALANIDPIIELIRRAPTPAEAKAALISRPWDLGNVAAMLERAGDDAARPEWLEPEFGVRDGQYYLTEQQAQAILDLRLQKLTGLEHEKLLDEYKELLEQIAELLHILGSADRLMEVIREEMELIRDQFGDERRTEITANSADINIEDLISQEDVVVTLSHQGYVKYQPLTDYEAQRRGGKGKSAARIKEEDFIDRLLVANTHDTILCFSSRGRLYWMKVYQLPEASRGARGRPIVNLLPLEANERITAILPVREYEEGVNVFMATASGTVKKTALTEFSRPRSAGIIAVNLNDGDELIGVDLTSGSDEVMLFSAAGKVVRFKEDAVRAMGRTATGVRGIKLAGDDKVVSLIIPRGEGAILTVTQNGYGKRTAADEYPTKSRATQGVISIKVTERNGSVVGAVQVDDCDQIMMITDAGTLVRTRVSEISVVGRNTQGVILIRTAEDENVVGLQRVAEPVDDEELDAIDGSVAEGDEDIAPEAESDDDVADDADE</sequence>
<proteinExistence type="evidence at protein level"/>
<protein>
    <recommendedName>
        <fullName evidence="1">DNA gyrase subunit A</fullName>
        <ecNumber evidence="1">5.6.2.2</ecNumber>
    </recommendedName>
</protein>
<accession>P37411</accession>
<organism>
    <name type="scientific">Salmonella typhimurium (strain LT2 / SGSC1412 / ATCC 700720)</name>
    <dbReference type="NCBI Taxonomy" id="99287"/>
    <lineage>
        <taxon>Bacteria</taxon>
        <taxon>Pseudomonadati</taxon>
        <taxon>Pseudomonadota</taxon>
        <taxon>Gammaproteobacteria</taxon>
        <taxon>Enterobacterales</taxon>
        <taxon>Enterobacteriaceae</taxon>
        <taxon>Salmonella</taxon>
    </lineage>
</organism>
<feature type="chain" id="PRO_0000145248" description="DNA gyrase subunit A">
    <location>
        <begin position="1"/>
        <end position="878"/>
    </location>
</feature>
<feature type="domain" description="Topo IIA-type catalytic" evidence="2">
    <location>
        <begin position="34"/>
        <end position="533"/>
    </location>
</feature>
<feature type="region of interest" description="Disordered" evidence="3">
    <location>
        <begin position="844"/>
        <end position="878"/>
    </location>
</feature>
<feature type="short sequence motif" description="GyrA-box" evidence="1">
    <location>
        <begin position="560"/>
        <end position="566"/>
    </location>
</feature>
<feature type="compositionally biased region" description="Acidic residues" evidence="3">
    <location>
        <begin position="857"/>
        <end position="878"/>
    </location>
</feature>
<feature type="active site" description="O-(5'-phospho-DNA)-tyrosine intermediate" evidence="1">
    <location>
        <position position="122"/>
    </location>
</feature>
<feature type="mutagenesis site" description="In gyrA213TS; a temperature-sensitive mutant, decreased (-) supercoiling even at permissive temperature." evidence="5">
    <original>R</original>
    <variation>H</variation>
    <location>
        <position position="358"/>
    </location>
</feature>
<feature type="mutagenesis site" description="In gyrA209TS; a temperature-sensitive mutant, 15% decreased growth rate, decreased (-) supercoiling even at permissive temperature." evidence="5">
    <original>G</original>
    <variation>D</variation>
    <location>
        <position position="597"/>
    </location>
</feature>
<name>GYRA_SALTY</name>